<accession>Q2YVT4</accession>
<dbReference type="EC" id="3.5.1.28"/>
<dbReference type="EMBL" id="AJ938182">
    <property type="protein sequence ID" value="CAI80102.1"/>
    <property type="molecule type" value="Genomic_DNA"/>
</dbReference>
<dbReference type="RefSeq" id="WP_001170266.1">
    <property type="nucleotide sequence ID" value="NC_007622.1"/>
</dbReference>
<dbReference type="SMR" id="Q2YVT4"/>
<dbReference type="CAZy" id="CBM50">
    <property type="family name" value="Carbohydrate-Binding Module Family 50"/>
</dbReference>
<dbReference type="MoonProt" id="Q2YVT4"/>
<dbReference type="KEGG" id="sab:SAB0414"/>
<dbReference type="HOGENOM" id="CLU_016043_1_3_9"/>
<dbReference type="GO" id="GO:0009986">
    <property type="term" value="C:cell surface"/>
    <property type="evidence" value="ECO:0007669"/>
    <property type="project" value="UniProtKB-SubCell"/>
</dbReference>
<dbReference type="GO" id="GO:0005576">
    <property type="term" value="C:extracellular region"/>
    <property type="evidence" value="ECO:0007669"/>
    <property type="project" value="UniProtKB-SubCell"/>
</dbReference>
<dbReference type="GO" id="GO:0008932">
    <property type="term" value="F:lytic endotransglycosylase activity"/>
    <property type="evidence" value="ECO:0007669"/>
    <property type="project" value="TreeGrafter"/>
</dbReference>
<dbReference type="GO" id="GO:0008745">
    <property type="term" value="F:N-acetylmuramoyl-L-alanine amidase activity"/>
    <property type="evidence" value="ECO:0007669"/>
    <property type="project" value="UniProtKB-EC"/>
</dbReference>
<dbReference type="GO" id="GO:0071555">
    <property type="term" value="P:cell wall organization"/>
    <property type="evidence" value="ECO:0007669"/>
    <property type="project" value="UniProtKB-KW"/>
</dbReference>
<dbReference type="GO" id="GO:0042742">
    <property type="term" value="P:defense response to bacterium"/>
    <property type="evidence" value="ECO:0007669"/>
    <property type="project" value="UniProtKB-KW"/>
</dbReference>
<dbReference type="GO" id="GO:0000917">
    <property type="term" value="P:division septum assembly"/>
    <property type="evidence" value="ECO:0007669"/>
    <property type="project" value="UniProtKB-KW"/>
</dbReference>
<dbReference type="GO" id="GO:0031640">
    <property type="term" value="P:killing of cells of another organism"/>
    <property type="evidence" value="ECO:0007669"/>
    <property type="project" value="UniProtKB-KW"/>
</dbReference>
<dbReference type="CDD" id="cd00118">
    <property type="entry name" value="LysM"/>
    <property type="match status" value="3"/>
</dbReference>
<dbReference type="Gene3D" id="3.90.1720.10">
    <property type="entry name" value="endopeptidase domain like (from Nostoc punctiforme)"/>
    <property type="match status" value="1"/>
</dbReference>
<dbReference type="Gene3D" id="3.10.350.10">
    <property type="entry name" value="LysM domain"/>
    <property type="match status" value="3"/>
</dbReference>
<dbReference type="InterPro" id="IPR007921">
    <property type="entry name" value="CHAP_dom"/>
</dbReference>
<dbReference type="InterPro" id="IPR018392">
    <property type="entry name" value="LysM_dom"/>
</dbReference>
<dbReference type="InterPro" id="IPR036779">
    <property type="entry name" value="LysM_dom_sf"/>
</dbReference>
<dbReference type="InterPro" id="IPR038765">
    <property type="entry name" value="Papain-like_cys_pep_sf"/>
</dbReference>
<dbReference type="PANTHER" id="PTHR33734">
    <property type="entry name" value="LYSM DOMAIN-CONTAINING GPI-ANCHORED PROTEIN 2"/>
    <property type="match status" value="1"/>
</dbReference>
<dbReference type="PANTHER" id="PTHR33734:SF22">
    <property type="entry name" value="MEMBRANE-BOUND LYTIC MUREIN TRANSGLYCOSYLASE D"/>
    <property type="match status" value="1"/>
</dbReference>
<dbReference type="Pfam" id="PF05257">
    <property type="entry name" value="CHAP"/>
    <property type="match status" value="1"/>
</dbReference>
<dbReference type="Pfam" id="PF01476">
    <property type="entry name" value="LysM"/>
    <property type="match status" value="3"/>
</dbReference>
<dbReference type="SMART" id="SM00257">
    <property type="entry name" value="LysM"/>
    <property type="match status" value="3"/>
</dbReference>
<dbReference type="SUPFAM" id="SSF54001">
    <property type="entry name" value="Cysteine proteinases"/>
    <property type="match status" value="1"/>
</dbReference>
<dbReference type="SUPFAM" id="SSF54106">
    <property type="entry name" value="LysM domain"/>
    <property type="match status" value="3"/>
</dbReference>
<dbReference type="PROSITE" id="PS50911">
    <property type="entry name" value="CHAP"/>
    <property type="match status" value="1"/>
</dbReference>
<dbReference type="PROSITE" id="PS51782">
    <property type="entry name" value="LYSM"/>
    <property type="match status" value="3"/>
</dbReference>
<feature type="signal peptide" evidence="2">
    <location>
        <begin position="1"/>
        <end position="25"/>
    </location>
</feature>
<feature type="chain" id="PRO_0000231621" description="N-acetylmuramoyl-L-alanine amidase sle1">
    <location>
        <begin position="26"/>
        <end position="335"/>
    </location>
</feature>
<feature type="domain" description="LysM 1" evidence="4">
    <location>
        <begin position="27"/>
        <end position="70"/>
    </location>
</feature>
<feature type="domain" description="LysM 2" evidence="4">
    <location>
        <begin position="91"/>
        <end position="134"/>
    </location>
</feature>
<feature type="domain" description="LysM 3" evidence="4">
    <location>
        <begin position="158"/>
        <end position="201"/>
    </location>
</feature>
<feature type="domain" description="Peptidase C51" evidence="3">
    <location>
        <begin position="211"/>
        <end position="335"/>
    </location>
</feature>
<feature type="region of interest" description="Disordered" evidence="5">
    <location>
        <begin position="71"/>
        <end position="90"/>
    </location>
</feature>
<feature type="compositionally biased region" description="Low complexity" evidence="5">
    <location>
        <begin position="71"/>
        <end position="86"/>
    </location>
</feature>
<protein>
    <recommendedName>
        <fullName>N-acetylmuramoyl-L-alanine amidase sle1</fullName>
        <ecNumber>3.5.1.28</ecNumber>
    </recommendedName>
</protein>
<proteinExistence type="inferred from homology"/>
<organism>
    <name type="scientific">Staphylococcus aureus (strain bovine RF122 / ET3-1)</name>
    <dbReference type="NCBI Taxonomy" id="273036"/>
    <lineage>
        <taxon>Bacteria</taxon>
        <taxon>Bacillati</taxon>
        <taxon>Bacillota</taxon>
        <taxon>Bacilli</taxon>
        <taxon>Bacillales</taxon>
        <taxon>Staphylococcaceae</taxon>
        <taxon>Staphylococcus</taxon>
    </lineage>
</organism>
<name>SLE1_STAAB</name>
<keyword id="KW-0929">Antimicrobial</keyword>
<keyword id="KW-0081">Bacteriolytic enzyme</keyword>
<keyword id="KW-0131">Cell cycle</keyword>
<keyword id="KW-0132">Cell division</keyword>
<keyword id="KW-0961">Cell wall biogenesis/degradation</keyword>
<keyword id="KW-0378">Hydrolase</keyword>
<keyword id="KW-0677">Repeat</keyword>
<keyword id="KW-0964">Secreted</keyword>
<keyword id="KW-0717">Septation</keyword>
<keyword id="KW-0732">Signal</keyword>
<keyword id="KW-0843">Virulence</keyword>
<reference key="1">
    <citation type="journal article" date="2007" name="PLoS ONE">
        <title>Molecular correlates of host specialization in Staphylococcus aureus.</title>
        <authorList>
            <person name="Herron-Olson L."/>
            <person name="Fitzgerald J.R."/>
            <person name="Musser J.M."/>
            <person name="Kapur V."/>
        </authorList>
    </citation>
    <scope>NUCLEOTIDE SEQUENCE [LARGE SCALE GENOMIC DNA]</scope>
    <source>
        <strain>bovine RF122 / ET3-1</strain>
    </source>
</reference>
<sequence length="335" mass="35937">MQKKVIAAIIGTSAISAVAATQANAATTHTVKPGESVWAISNKYGISIAKLKSLNNLTSNLIFPNQVLKVSGSSNSTSNSSRPSTNSGGGSYYTVQAGDSLSLIASKYGTTYQNIMRLNGLNNFFIYPGQKLKVSGTASSSNAASNSSRPSTNSGGGSYYTVQAGDSLSLIASKYGTTYQKIMSLNGLNNFFIYPGQKLKVTGNATSSNSASATTTNRGYNTPVFSHQNLYTWGQCTYHVFNRRAEIGKGISTYWWNANNWDNAAAADGYTIDNRPTVGSIAQTDVGYYGHVMFVERVNNDGSILVSEMNYSAAPGILTYRTVPAYQVNNYRYIH</sequence>
<evidence type="ECO:0000250" key="1"/>
<evidence type="ECO:0000255" key="2"/>
<evidence type="ECO:0000255" key="3">
    <source>
        <dbReference type="PROSITE-ProRule" id="PRU00048"/>
    </source>
</evidence>
<evidence type="ECO:0000255" key="4">
    <source>
        <dbReference type="PROSITE-ProRule" id="PRU01118"/>
    </source>
</evidence>
<evidence type="ECO:0000256" key="5">
    <source>
        <dbReference type="SAM" id="MobiDB-lite"/>
    </source>
</evidence>
<comment type="function">
    <text evidence="1">Peptidoglycan hydrolase involved in the splitting of the septum during cell division.</text>
</comment>
<comment type="catalytic activity">
    <reaction>
        <text>Hydrolyzes the link between N-acetylmuramoyl residues and L-amino acid residues in certain cell-wall glycopeptides.</text>
        <dbReference type="EC" id="3.5.1.28"/>
    </reaction>
</comment>
<comment type="subcellular location">
    <subcellularLocation>
        <location evidence="1">Secreted</location>
    </subcellularLocation>
    <subcellularLocation>
        <location evidence="1">Cell surface</location>
    </subcellularLocation>
</comment>
<gene>
    <name type="primary">sle1</name>
    <name type="synonym">aaa</name>
    <name type="ordered locus">SAB0414</name>
</gene>